<proteinExistence type="inferred from homology"/>
<gene>
    <name type="primary">cdtC</name>
</gene>
<organism>
    <name type="scientific">Escherichia coli</name>
    <dbReference type="NCBI Taxonomy" id="562"/>
    <lineage>
        <taxon>Bacteria</taxon>
        <taxon>Pseudomonadati</taxon>
        <taxon>Pseudomonadota</taxon>
        <taxon>Gammaproteobacteria</taxon>
        <taxon>Enterobacterales</taxon>
        <taxon>Enterobacteriaceae</taxon>
        <taxon>Escherichia</taxon>
    </lineage>
</organism>
<keyword id="KW-0998">Cell outer membrane</keyword>
<keyword id="KW-0430">Lectin</keyword>
<keyword id="KW-0449">Lipoprotein</keyword>
<keyword id="KW-0472">Membrane</keyword>
<keyword id="KW-0564">Palmitate</keyword>
<keyword id="KW-0732">Signal</keyword>
<keyword id="KW-0800">Toxin</keyword>
<keyword id="KW-0843">Virulence</keyword>
<feature type="signal peptide" evidence="2">
    <location>
        <begin position="1"/>
        <end position="15"/>
    </location>
</feature>
<feature type="chain" id="PRO_0000013375" description="Cytolethal distending toxin subunit C">
    <location>
        <begin position="16"/>
        <end position="181"/>
    </location>
</feature>
<feature type="domain" description="Ricin B-type lectin" evidence="1">
    <location>
        <begin position="79"/>
        <end position="181"/>
    </location>
</feature>
<feature type="lipid moiety-binding region" description="N-palmitoyl cysteine" evidence="2">
    <location>
        <position position="16"/>
    </location>
</feature>
<feature type="lipid moiety-binding region" description="S-diacylglycerol cysteine" evidence="2">
    <location>
        <position position="16"/>
    </location>
</feature>
<evidence type="ECO:0000255" key="1">
    <source>
        <dbReference type="PROSITE-ProRule" id="PRU00174"/>
    </source>
</evidence>
<evidence type="ECO:0000255" key="2">
    <source>
        <dbReference type="PROSITE-ProRule" id="PRU00303"/>
    </source>
</evidence>
<evidence type="ECO:0000305" key="3"/>
<name>CDTC_ECOLX</name>
<sequence>MKKLAIVFTMLLIAGCSSSQDSANNQIDELGKENNSLFTFRNIQSGLMIHNGLHQHGRETIGWEIVPVKTPEEALVTDQSGWIMIRTPNTDQCLGTPDGRNLLKMTCNSTAKKTLFSLIPSTTGAVQIKSVLSGLCFLDSKNSGLSFETGKCIADFKKPFEVVPQSHLWMLNPLNTESPII</sequence>
<reference key="1">
    <citation type="journal article" date="1994" name="Infect. Immun.">
        <title>Cloning, sequencing, and expression of the Escherichia coli cytolethal distending toxin genes.</title>
        <authorList>
            <person name="Pickett C.L."/>
            <person name="Cottle D.L."/>
            <person name="Pesci E.C."/>
            <person name="Bikah G."/>
        </authorList>
    </citation>
    <scope>NUCLEOTIDE SEQUENCE [GENOMIC DNA]</scope>
    <source>
        <strain>O128:H- / 9142-88 / EPEC</strain>
    </source>
</reference>
<dbReference type="EMBL" id="U04208">
    <property type="protein sequence ID" value="AAA18787.1"/>
    <property type="molecule type" value="Unassigned_DNA"/>
</dbReference>
<dbReference type="PIR" id="I69096">
    <property type="entry name" value="I69096"/>
</dbReference>
<dbReference type="SMR" id="Q46670"/>
<dbReference type="TCDB" id="1.C.98.1.1">
    <property type="family name" value="the cytolethal distending toxin (cdt) family"/>
</dbReference>
<dbReference type="GO" id="GO:0009279">
    <property type="term" value="C:cell outer membrane"/>
    <property type="evidence" value="ECO:0007669"/>
    <property type="project" value="UniProtKB-SubCell"/>
</dbReference>
<dbReference type="GO" id="GO:0030246">
    <property type="term" value="F:carbohydrate binding"/>
    <property type="evidence" value="ECO:0007669"/>
    <property type="project" value="UniProtKB-KW"/>
</dbReference>
<dbReference type="GO" id="GO:0090729">
    <property type="term" value="F:toxin activity"/>
    <property type="evidence" value="ECO:0007669"/>
    <property type="project" value="UniProtKB-KW"/>
</dbReference>
<dbReference type="CDD" id="cd23413">
    <property type="entry name" value="beta-trefoil_Ricin_CdtC"/>
    <property type="match status" value="1"/>
</dbReference>
<dbReference type="Gene3D" id="2.80.10.50">
    <property type="match status" value="1"/>
</dbReference>
<dbReference type="InterPro" id="IPR003558">
    <property type="entry name" value="CDtoxinA/C"/>
</dbReference>
<dbReference type="InterPro" id="IPR003559">
    <property type="entry name" value="CDtoxinC"/>
</dbReference>
<dbReference type="InterPro" id="IPR035992">
    <property type="entry name" value="Ricin_B-like_lectins"/>
</dbReference>
<dbReference type="Pfam" id="PF03498">
    <property type="entry name" value="CDtoxinA"/>
    <property type="match status" value="1"/>
</dbReference>
<dbReference type="PRINTS" id="PR01389">
    <property type="entry name" value="CDTOXINC"/>
</dbReference>
<dbReference type="SUPFAM" id="SSF50370">
    <property type="entry name" value="Ricin B-like lectins"/>
    <property type="match status" value="1"/>
</dbReference>
<dbReference type="PROSITE" id="PS51257">
    <property type="entry name" value="PROKAR_LIPOPROTEIN"/>
    <property type="match status" value="1"/>
</dbReference>
<dbReference type="PROSITE" id="PS50231">
    <property type="entry name" value="RICIN_B_LECTIN"/>
    <property type="match status" value="1"/>
</dbReference>
<comment type="function">
    <text>Part of the tripartite complex that is required for the CDT activity. CdtC, along with CdtA, probably forms a heterodimeric subunit required for the delivery of CdtB.</text>
</comment>
<comment type="subunit">
    <text>Heterotrimer of 3 subunits, CdtA, CdtB and CdtC.</text>
</comment>
<comment type="subcellular location">
    <subcellularLocation>
        <location evidence="3">Cell outer membrane</location>
        <topology evidence="3">Lipid-anchor</topology>
    </subcellularLocation>
</comment>
<comment type="miscellaneous">
    <text>The operon of the strain O128:H- / 9142-88 / EPEC is referred to as cdt type II (CDT-II).</text>
</comment>
<accession>Q46670</accession>
<protein>
    <recommendedName>
        <fullName>Cytolethal distending toxin subunit C</fullName>
        <shortName>CDT C</shortName>
    </recommendedName>
</protein>